<sequence length="368" mass="41053">MSDLEQLQSQILADIASASDEAALEAVRVATLGKKGSISALLSTLGKMSPDERKSEGAKINLAKDTVTQALAARREVLKALALDARLASETIDVTLPLRESPAEAGRIHPLSQVWDEVTTIFADMGFAVAEGPDIETDDYNFTRLNFPEGHPAREMHDTFYFNPKEAAGSEAGEKPSRLLLRTHTSPVQVRTMLSQKPPIRVICPGRTYRSDSDQTHTPMFHQVEGLVIDKSSHLGHLKWILHEFCKAFFEVDNVNMRFRPSFFPFTEPSLEVDIQCRRDKNEIRFGEGEDWLEILGCGMVHPNVLKLCGLDPEVYQGFAWGMGIDRIAMLKYGIADLRQLFEGDVRWLNHYGFRPLEVPTLAGGLSS</sequence>
<keyword id="KW-0030">Aminoacyl-tRNA synthetase</keyword>
<keyword id="KW-0067">ATP-binding</keyword>
<keyword id="KW-0963">Cytoplasm</keyword>
<keyword id="KW-0436">Ligase</keyword>
<keyword id="KW-0460">Magnesium</keyword>
<keyword id="KW-0479">Metal-binding</keyword>
<keyword id="KW-0547">Nucleotide-binding</keyword>
<keyword id="KW-0648">Protein biosynthesis</keyword>
<keyword id="KW-1185">Reference proteome</keyword>
<evidence type="ECO:0000255" key="1">
    <source>
        <dbReference type="HAMAP-Rule" id="MF_00281"/>
    </source>
</evidence>
<feature type="chain" id="PRO_1000006865" description="Phenylalanine--tRNA ligase alpha subunit">
    <location>
        <begin position="1"/>
        <end position="368"/>
    </location>
</feature>
<feature type="binding site" evidence="1">
    <location>
        <position position="268"/>
    </location>
    <ligand>
        <name>Mg(2+)</name>
        <dbReference type="ChEBI" id="CHEBI:18420"/>
        <note>shared with beta subunit</note>
    </ligand>
</feature>
<reference key="1">
    <citation type="submission" date="2006-03" db="EMBL/GenBank/DDBJ databases">
        <title>Complete sequence of chromosome of Nitrobacter hamburgensis X14.</title>
        <authorList>
            <consortium name="US DOE Joint Genome Institute"/>
            <person name="Copeland A."/>
            <person name="Lucas S."/>
            <person name="Lapidus A."/>
            <person name="Barry K."/>
            <person name="Detter J.C."/>
            <person name="Glavina del Rio T."/>
            <person name="Hammon N."/>
            <person name="Israni S."/>
            <person name="Dalin E."/>
            <person name="Tice H."/>
            <person name="Pitluck S."/>
            <person name="Chain P."/>
            <person name="Malfatti S."/>
            <person name="Shin M."/>
            <person name="Vergez L."/>
            <person name="Schmutz J."/>
            <person name="Larimer F."/>
            <person name="Land M."/>
            <person name="Hauser L."/>
            <person name="Kyrpides N."/>
            <person name="Ivanova N."/>
            <person name="Ward B."/>
            <person name="Arp D."/>
            <person name="Klotz M."/>
            <person name="Stein L."/>
            <person name="O'Mullan G."/>
            <person name="Starkenburg S."/>
            <person name="Sayavedra L."/>
            <person name="Poret-Peterson A.T."/>
            <person name="Gentry M.E."/>
            <person name="Bruce D."/>
            <person name="Richardson P."/>
        </authorList>
    </citation>
    <scope>NUCLEOTIDE SEQUENCE [LARGE SCALE GENOMIC DNA]</scope>
    <source>
        <strain>DSM 10229 / NCIMB 13809 / X14</strain>
    </source>
</reference>
<accession>Q1QS22</accession>
<organism>
    <name type="scientific">Nitrobacter hamburgensis (strain DSM 10229 / NCIMB 13809 / X14)</name>
    <dbReference type="NCBI Taxonomy" id="323097"/>
    <lineage>
        <taxon>Bacteria</taxon>
        <taxon>Pseudomonadati</taxon>
        <taxon>Pseudomonadota</taxon>
        <taxon>Alphaproteobacteria</taxon>
        <taxon>Hyphomicrobiales</taxon>
        <taxon>Nitrobacteraceae</taxon>
        <taxon>Nitrobacter</taxon>
    </lineage>
</organism>
<proteinExistence type="inferred from homology"/>
<gene>
    <name evidence="1" type="primary">pheS</name>
    <name type="ordered locus">Nham_0074</name>
</gene>
<name>SYFA_NITHX</name>
<comment type="catalytic activity">
    <reaction evidence="1">
        <text>tRNA(Phe) + L-phenylalanine + ATP = L-phenylalanyl-tRNA(Phe) + AMP + diphosphate + H(+)</text>
        <dbReference type="Rhea" id="RHEA:19413"/>
        <dbReference type="Rhea" id="RHEA-COMP:9668"/>
        <dbReference type="Rhea" id="RHEA-COMP:9699"/>
        <dbReference type="ChEBI" id="CHEBI:15378"/>
        <dbReference type="ChEBI" id="CHEBI:30616"/>
        <dbReference type="ChEBI" id="CHEBI:33019"/>
        <dbReference type="ChEBI" id="CHEBI:58095"/>
        <dbReference type="ChEBI" id="CHEBI:78442"/>
        <dbReference type="ChEBI" id="CHEBI:78531"/>
        <dbReference type="ChEBI" id="CHEBI:456215"/>
        <dbReference type="EC" id="6.1.1.20"/>
    </reaction>
</comment>
<comment type="cofactor">
    <cofactor evidence="1">
        <name>Mg(2+)</name>
        <dbReference type="ChEBI" id="CHEBI:18420"/>
    </cofactor>
    <text evidence="1">Binds 2 magnesium ions per tetramer.</text>
</comment>
<comment type="subunit">
    <text evidence="1">Tetramer of two alpha and two beta subunits.</text>
</comment>
<comment type="subcellular location">
    <subcellularLocation>
        <location evidence="1">Cytoplasm</location>
    </subcellularLocation>
</comment>
<comment type="similarity">
    <text evidence="1">Belongs to the class-II aminoacyl-tRNA synthetase family. Phe-tRNA synthetase alpha subunit type 1 subfamily.</text>
</comment>
<protein>
    <recommendedName>
        <fullName evidence="1">Phenylalanine--tRNA ligase alpha subunit</fullName>
        <ecNumber evidence="1">6.1.1.20</ecNumber>
    </recommendedName>
    <alternativeName>
        <fullName evidence="1">Phenylalanyl-tRNA synthetase alpha subunit</fullName>
        <shortName evidence="1">PheRS</shortName>
    </alternativeName>
</protein>
<dbReference type="EC" id="6.1.1.20" evidence="1"/>
<dbReference type="EMBL" id="CP000319">
    <property type="protein sequence ID" value="ABE60975.1"/>
    <property type="molecule type" value="Genomic_DNA"/>
</dbReference>
<dbReference type="RefSeq" id="WP_011508682.1">
    <property type="nucleotide sequence ID" value="NC_007964.1"/>
</dbReference>
<dbReference type="SMR" id="Q1QS22"/>
<dbReference type="STRING" id="323097.Nham_0074"/>
<dbReference type="KEGG" id="nha:Nham_0074"/>
<dbReference type="eggNOG" id="COG0016">
    <property type="taxonomic scope" value="Bacteria"/>
</dbReference>
<dbReference type="HOGENOM" id="CLU_025086_0_1_5"/>
<dbReference type="OrthoDB" id="9800719at2"/>
<dbReference type="Proteomes" id="UP000001953">
    <property type="component" value="Chromosome"/>
</dbReference>
<dbReference type="GO" id="GO:0005737">
    <property type="term" value="C:cytoplasm"/>
    <property type="evidence" value="ECO:0007669"/>
    <property type="project" value="UniProtKB-SubCell"/>
</dbReference>
<dbReference type="GO" id="GO:0005524">
    <property type="term" value="F:ATP binding"/>
    <property type="evidence" value="ECO:0007669"/>
    <property type="project" value="UniProtKB-UniRule"/>
</dbReference>
<dbReference type="GO" id="GO:0000287">
    <property type="term" value="F:magnesium ion binding"/>
    <property type="evidence" value="ECO:0007669"/>
    <property type="project" value="UniProtKB-UniRule"/>
</dbReference>
<dbReference type="GO" id="GO:0004826">
    <property type="term" value="F:phenylalanine-tRNA ligase activity"/>
    <property type="evidence" value="ECO:0007669"/>
    <property type="project" value="UniProtKB-UniRule"/>
</dbReference>
<dbReference type="GO" id="GO:0000049">
    <property type="term" value="F:tRNA binding"/>
    <property type="evidence" value="ECO:0007669"/>
    <property type="project" value="InterPro"/>
</dbReference>
<dbReference type="GO" id="GO:0006432">
    <property type="term" value="P:phenylalanyl-tRNA aminoacylation"/>
    <property type="evidence" value="ECO:0007669"/>
    <property type="project" value="UniProtKB-UniRule"/>
</dbReference>
<dbReference type="CDD" id="cd00496">
    <property type="entry name" value="PheRS_alpha_core"/>
    <property type="match status" value="1"/>
</dbReference>
<dbReference type="FunFam" id="3.30.930.10:FF:000003">
    <property type="entry name" value="Phenylalanine--tRNA ligase alpha subunit"/>
    <property type="match status" value="1"/>
</dbReference>
<dbReference type="Gene3D" id="3.30.930.10">
    <property type="entry name" value="Bira Bifunctional Protein, Domain 2"/>
    <property type="match status" value="1"/>
</dbReference>
<dbReference type="HAMAP" id="MF_00281">
    <property type="entry name" value="Phe_tRNA_synth_alpha1"/>
    <property type="match status" value="1"/>
</dbReference>
<dbReference type="InterPro" id="IPR006195">
    <property type="entry name" value="aa-tRNA-synth_II"/>
</dbReference>
<dbReference type="InterPro" id="IPR045864">
    <property type="entry name" value="aa-tRNA-synth_II/BPL/LPL"/>
</dbReference>
<dbReference type="InterPro" id="IPR004529">
    <property type="entry name" value="Phe-tRNA-synth_IIc_asu"/>
</dbReference>
<dbReference type="InterPro" id="IPR004188">
    <property type="entry name" value="Phe-tRNA_ligase_II_N"/>
</dbReference>
<dbReference type="InterPro" id="IPR022911">
    <property type="entry name" value="Phe_tRNA_ligase_alpha1_bac"/>
</dbReference>
<dbReference type="InterPro" id="IPR002319">
    <property type="entry name" value="Phenylalanyl-tRNA_Synthase"/>
</dbReference>
<dbReference type="InterPro" id="IPR010978">
    <property type="entry name" value="tRNA-bd_arm"/>
</dbReference>
<dbReference type="NCBIfam" id="TIGR00468">
    <property type="entry name" value="pheS"/>
    <property type="match status" value="1"/>
</dbReference>
<dbReference type="PANTHER" id="PTHR11538:SF41">
    <property type="entry name" value="PHENYLALANINE--TRNA LIGASE, MITOCHONDRIAL"/>
    <property type="match status" value="1"/>
</dbReference>
<dbReference type="PANTHER" id="PTHR11538">
    <property type="entry name" value="PHENYLALANYL-TRNA SYNTHETASE"/>
    <property type="match status" value="1"/>
</dbReference>
<dbReference type="Pfam" id="PF02912">
    <property type="entry name" value="Phe_tRNA-synt_N"/>
    <property type="match status" value="1"/>
</dbReference>
<dbReference type="Pfam" id="PF01409">
    <property type="entry name" value="tRNA-synt_2d"/>
    <property type="match status" value="1"/>
</dbReference>
<dbReference type="SUPFAM" id="SSF55681">
    <property type="entry name" value="Class II aaRS and biotin synthetases"/>
    <property type="match status" value="1"/>
</dbReference>
<dbReference type="SUPFAM" id="SSF46589">
    <property type="entry name" value="tRNA-binding arm"/>
    <property type="match status" value="1"/>
</dbReference>
<dbReference type="PROSITE" id="PS50862">
    <property type="entry name" value="AA_TRNA_LIGASE_II"/>
    <property type="match status" value="1"/>
</dbReference>